<reference key="1">
    <citation type="journal article" date="2006" name="BMC Genomics">
        <title>Complete genome sequence of Shigella flexneri 5b and comparison with Shigella flexneri 2a.</title>
        <authorList>
            <person name="Nie H."/>
            <person name="Yang F."/>
            <person name="Zhang X."/>
            <person name="Yang J."/>
            <person name="Chen L."/>
            <person name="Wang J."/>
            <person name="Xiong Z."/>
            <person name="Peng J."/>
            <person name="Sun L."/>
            <person name="Dong J."/>
            <person name="Xue Y."/>
            <person name="Xu X."/>
            <person name="Chen S."/>
            <person name="Yao Z."/>
            <person name="Shen Y."/>
            <person name="Jin Q."/>
        </authorList>
    </citation>
    <scope>NUCLEOTIDE SEQUENCE [LARGE SCALE GENOMIC DNA]</scope>
    <source>
        <strain>8401</strain>
    </source>
</reference>
<protein>
    <recommendedName>
        <fullName evidence="1">Cell division protein ZapB</fullName>
    </recommendedName>
</protein>
<gene>
    <name evidence="1" type="primary">zapB</name>
    <name type="ordered locus">SFV_3999</name>
</gene>
<proteinExistence type="inferred from homology"/>
<feature type="chain" id="PRO_0000333935" description="Cell division protein ZapB">
    <location>
        <begin position="1"/>
        <end position="81"/>
    </location>
</feature>
<feature type="region of interest" description="Disordered" evidence="2">
    <location>
        <begin position="36"/>
        <end position="67"/>
    </location>
</feature>
<feature type="coiled-coil region" evidence="1">
    <location>
        <begin position="5"/>
        <end position="81"/>
    </location>
</feature>
<feature type="compositionally biased region" description="Polar residues" evidence="2">
    <location>
        <begin position="37"/>
        <end position="47"/>
    </location>
</feature>
<feature type="compositionally biased region" description="Basic and acidic residues" evidence="2">
    <location>
        <begin position="48"/>
        <end position="62"/>
    </location>
</feature>
<feature type="modified residue" description="N6-acetyllysine" evidence="1">
    <location>
        <position position="10"/>
    </location>
</feature>
<accession>Q0SY61</accession>
<name>ZAPB_SHIF8</name>
<sequence length="81" mass="9635">MTMSLEVFEKLEAKVQQAIDTITLLQMEIEELKEKNNSLSQEVQNAQHQREELERENNHLKEQQNGWQERLQALLGRMEEV</sequence>
<keyword id="KW-0007">Acetylation</keyword>
<keyword id="KW-0131">Cell cycle</keyword>
<keyword id="KW-0132">Cell division</keyword>
<keyword id="KW-0175">Coiled coil</keyword>
<keyword id="KW-0963">Cytoplasm</keyword>
<keyword id="KW-0717">Septation</keyword>
<comment type="function">
    <text evidence="1">Non-essential, abundant cell division factor that is required for proper Z-ring formation. It is recruited early to the divisome by direct interaction with FtsZ, stimulating Z-ring assembly and thereby promoting cell division earlier in the cell cycle. Its recruitment to the Z-ring requires functional FtsA or ZipA.</text>
</comment>
<comment type="subunit">
    <text evidence="1">Homodimer. The ends of the coiled-coil dimer bind to each other, forming polymers. Interacts with FtsZ.</text>
</comment>
<comment type="subcellular location">
    <subcellularLocation>
        <location>Cytoplasm</location>
    </subcellularLocation>
    <text evidence="1">Localizes to the septum at mid-cell, in a FtsZ-like pattern.</text>
</comment>
<comment type="similarity">
    <text evidence="1">Belongs to the ZapB family.</text>
</comment>
<comment type="sequence caution" evidence="3">
    <conflict type="erroneous initiation">
        <sequence resource="EMBL-CDS" id="ABF06004"/>
    </conflict>
</comment>
<dbReference type="EMBL" id="CP000266">
    <property type="protein sequence ID" value="ABF06004.1"/>
    <property type="status" value="ALT_INIT"/>
    <property type="molecule type" value="Genomic_DNA"/>
</dbReference>
<dbReference type="RefSeq" id="WP_001296623.1">
    <property type="nucleotide sequence ID" value="NC_008258.1"/>
</dbReference>
<dbReference type="SMR" id="Q0SY61"/>
<dbReference type="GeneID" id="93777970"/>
<dbReference type="KEGG" id="sfv:SFV_3999"/>
<dbReference type="HOGENOM" id="CLU_171174_2_0_6"/>
<dbReference type="Proteomes" id="UP000000659">
    <property type="component" value="Chromosome"/>
</dbReference>
<dbReference type="GO" id="GO:0005737">
    <property type="term" value="C:cytoplasm"/>
    <property type="evidence" value="ECO:0007669"/>
    <property type="project" value="UniProtKB-SubCell"/>
</dbReference>
<dbReference type="GO" id="GO:0000917">
    <property type="term" value="P:division septum assembly"/>
    <property type="evidence" value="ECO:0007669"/>
    <property type="project" value="UniProtKB-KW"/>
</dbReference>
<dbReference type="GO" id="GO:0043093">
    <property type="term" value="P:FtsZ-dependent cytokinesis"/>
    <property type="evidence" value="ECO:0007669"/>
    <property type="project" value="UniProtKB-UniRule"/>
</dbReference>
<dbReference type="FunFam" id="1.20.5.340:FF:000014">
    <property type="entry name" value="Cell division protein ZapB"/>
    <property type="match status" value="1"/>
</dbReference>
<dbReference type="Gene3D" id="1.20.5.340">
    <property type="match status" value="1"/>
</dbReference>
<dbReference type="HAMAP" id="MF_01196">
    <property type="entry name" value="ZapB"/>
    <property type="match status" value="1"/>
</dbReference>
<dbReference type="InterPro" id="IPR009252">
    <property type="entry name" value="Cell_div_ZapB"/>
</dbReference>
<dbReference type="NCBIfam" id="NF011951">
    <property type="entry name" value="PRK15422.1"/>
    <property type="match status" value="1"/>
</dbReference>
<dbReference type="Pfam" id="PF06005">
    <property type="entry name" value="ZapB"/>
    <property type="match status" value="1"/>
</dbReference>
<organism>
    <name type="scientific">Shigella flexneri serotype 5b (strain 8401)</name>
    <dbReference type="NCBI Taxonomy" id="373384"/>
    <lineage>
        <taxon>Bacteria</taxon>
        <taxon>Pseudomonadati</taxon>
        <taxon>Pseudomonadota</taxon>
        <taxon>Gammaproteobacteria</taxon>
        <taxon>Enterobacterales</taxon>
        <taxon>Enterobacteriaceae</taxon>
        <taxon>Shigella</taxon>
    </lineage>
</organism>
<evidence type="ECO:0000255" key="1">
    <source>
        <dbReference type="HAMAP-Rule" id="MF_01196"/>
    </source>
</evidence>
<evidence type="ECO:0000256" key="2">
    <source>
        <dbReference type="SAM" id="MobiDB-lite"/>
    </source>
</evidence>
<evidence type="ECO:0000305" key="3"/>